<proteinExistence type="inferred from homology"/>
<sequence length="600" mass="68725">MVNNMTDLTAQEPAWQTRDHLDDPVIGELRNRFGPDAFTVQATRTGVPVVWIKREQLLEVGDFLKKLPKPYVMLFDLHGMDERLRTHREGLPAADFSVFYHLISIDRNRDIMLKVALAENDLHVPTFTKLFPNANWYERETWDLFGITFDGHPNLRRIMMPQTWKGHPLRKDYPARATEFSPFELTKAKQDLEMEALTFKPEEWGMKRGTENEDFMFLNLGPNHPSAHGAFRIVLQLDGEEIVDCVPDIGYHHRGAEKMGERQSWHSYIPYTDRIEYLGGCVNEMPYVLAVEKLAGITVPDRVNVIRVMLSELFRINSHLLYISTFIQDVGAMTPVFFAFTDRQKIYDLVEAITGFRMHPAWFRIGGVAHDLPRGWDRLLREFLDWMPKRLASYEKAALQNTILKGRSQGVAAYGAKEALEWGTTGAGLRATGIDFDVRKARPYSGYENFDFEIPVGGGISDCYTRVMLKVEELRQSLRILEQCLNNMPEGPFKADHPLTTPPPKERTLQHIETLITHFLQVSWGPVMPANESFQMVEATKGINSYYLTSDGSTMSYRTRIRTPSYAHLQQIPAAIRGSLVSDLIVYLGSIDFVMSDVDR</sequence>
<feature type="chain" id="PRO_1000166679" description="NADH-quinone oxidoreductase subunit C/D">
    <location>
        <begin position="1"/>
        <end position="600"/>
    </location>
</feature>
<feature type="region of interest" description="NADH dehydrogenase I subunit C" evidence="1">
    <location>
        <begin position="1"/>
        <end position="190"/>
    </location>
</feature>
<feature type="region of interest" description="NADH dehydrogenase I subunit D" evidence="1">
    <location>
        <begin position="214"/>
        <end position="600"/>
    </location>
</feature>
<keyword id="KW-0997">Cell inner membrane</keyword>
<keyword id="KW-1003">Cell membrane</keyword>
<keyword id="KW-0472">Membrane</keyword>
<keyword id="KW-0511">Multifunctional enzyme</keyword>
<keyword id="KW-0520">NAD</keyword>
<keyword id="KW-0874">Quinone</keyword>
<keyword id="KW-1185">Reference proteome</keyword>
<keyword id="KW-1278">Translocase</keyword>
<keyword id="KW-0813">Transport</keyword>
<keyword id="KW-0830">Ubiquinone</keyword>
<dbReference type="EC" id="7.1.1.-" evidence="1"/>
<dbReference type="EMBL" id="FM180568">
    <property type="protein sequence ID" value="CAS09974.1"/>
    <property type="molecule type" value="Genomic_DNA"/>
</dbReference>
<dbReference type="SMR" id="B7UFU4"/>
<dbReference type="KEGG" id="ecg:E2348C_2426"/>
<dbReference type="HOGENOM" id="CLU_015134_3_2_6"/>
<dbReference type="Proteomes" id="UP000008205">
    <property type="component" value="Chromosome"/>
</dbReference>
<dbReference type="GO" id="GO:0030964">
    <property type="term" value="C:NADH dehydrogenase complex"/>
    <property type="evidence" value="ECO:0007669"/>
    <property type="project" value="InterPro"/>
</dbReference>
<dbReference type="GO" id="GO:0005886">
    <property type="term" value="C:plasma membrane"/>
    <property type="evidence" value="ECO:0007669"/>
    <property type="project" value="UniProtKB-SubCell"/>
</dbReference>
<dbReference type="GO" id="GO:0051287">
    <property type="term" value="F:NAD binding"/>
    <property type="evidence" value="ECO:0007669"/>
    <property type="project" value="InterPro"/>
</dbReference>
<dbReference type="GO" id="GO:0008137">
    <property type="term" value="F:NADH dehydrogenase (ubiquinone) activity"/>
    <property type="evidence" value="ECO:0007669"/>
    <property type="project" value="InterPro"/>
</dbReference>
<dbReference type="GO" id="GO:0050136">
    <property type="term" value="F:NADH:ubiquinone reductase (non-electrogenic) activity"/>
    <property type="evidence" value="ECO:0007669"/>
    <property type="project" value="UniProtKB-UniRule"/>
</dbReference>
<dbReference type="GO" id="GO:0048038">
    <property type="term" value="F:quinone binding"/>
    <property type="evidence" value="ECO:0007669"/>
    <property type="project" value="UniProtKB-KW"/>
</dbReference>
<dbReference type="FunFam" id="1.10.645.10:FF:000001">
    <property type="entry name" value="NADH-quinone oxidoreductase subunit C/D"/>
    <property type="match status" value="1"/>
</dbReference>
<dbReference type="FunFam" id="3.30.460.80:FF:000001">
    <property type="entry name" value="NADH-quinone oxidoreductase subunit C/D"/>
    <property type="match status" value="1"/>
</dbReference>
<dbReference type="Gene3D" id="1.10.645.10">
    <property type="entry name" value="Cytochrome-c3 Hydrogenase, chain B"/>
    <property type="match status" value="1"/>
</dbReference>
<dbReference type="Gene3D" id="3.30.460.80">
    <property type="entry name" value="NADH:ubiquinone oxidoreductase, 30kDa subunit"/>
    <property type="match status" value="1"/>
</dbReference>
<dbReference type="HAMAP" id="MF_01357">
    <property type="entry name" value="NDH1_NuoC"/>
    <property type="match status" value="1"/>
</dbReference>
<dbReference type="HAMAP" id="MF_01359">
    <property type="entry name" value="NDH1_NuoCD_1"/>
    <property type="match status" value="1"/>
</dbReference>
<dbReference type="HAMAP" id="MF_01358">
    <property type="entry name" value="NDH1_NuoD"/>
    <property type="match status" value="1"/>
</dbReference>
<dbReference type="InterPro" id="IPR010218">
    <property type="entry name" value="NADH_DH_suC"/>
</dbReference>
<dbReference type="InterPro" id="IPR023062">
    <property type="entry name" value="NADH_DH_suCD"/>
</dbReference>
<dbReference type="InterPro" id="IPR001135">
    <property type="entry name" value="NADH_Q_OxRdtase_suD"/>
</dbReference>
<dbReference type="InterPro" id="IPR037232">
    <property type="entry name" value="NADH_quin_OxRdtase_su_C/D-like"/>
</dbReference>
<dbReference type="InterPro" id="IPR001268">
    <property type="entry name" value="NADH_UbQ_OxRdtase_30kDa_su"/>
</dbReference>
<dbReference type="InterPro" id="IPR014029">
    <property type="entry name" value="NADH_UbQ_OxRdtase_49kDa_CS"/>
</dbReference>
<dbReference type="InterPro" id="IPR020396">
    <property type="entry name" value="NADH_UbQ_OxRdtase_CS"/>
</dbReference>
<dbReference type="InterPro" id="IPR022885">
    <property type="entry name" value="NDH1_su_D/H"/>
</dbReference>
<dbReference type="InterPro" id="IPR029014">
    <property type="entry name" value="NiFe-Hase_large"/>
</dbReference>
<dbReference type="NCBIfam" id="TIGR01961">
    <property type="entry name" value="NuoC_fam"/>
    <property type="match status" value="1"/>
</dbReference>
<dbReference type="NCBIfam" id="TIGR01962">
    <property type="entry name" value="NuoD"/>
    <property type="match status" value="1"/>
</dbReference>
<dbReference type="NCBIfam" id="NF004739">
    <property type="entry name" value="PRK06075.1"/>
    <property type="match status" value="1"/>
</dbReference>
<dbReference type="NCBIfam" id="NF008728">
    <property type="entry name" value="PRK11742.1"/>
    <property type="match status" value="1"/>
</dbReference>
<dbReference type="PANTHER" id="PTHR11993:SF45">
    <property type="entry name" value="NADH-QUINONE OXIDOREDUCTASE SUBUNIT C_D"/>
    <property type="match status" value="1"/>
</dbReference>
<dbReference type="PANTHER" id="PTHR11993">
    <property type="entry name" value="NADH-UBIQUINONE OXIDOREDUCTASE 49 KDA SUBUNIT"/>
    <property type="match status" value="1"/>
</dbReference>
<dbReference type="Pfam" id="PF00329">
    <property type="entry name" value="Complex1_30kDa"/>
    <property type="match status" value="1"/>
</dbReference>
<dbReference type="Pfam" id="PF00346">
    <property type="entry name" value="Complex1_49kDa"/>
    <property type="match status" value="1"/>
</dbReference>
<dbReference type="SUPFAM" id="SSF56762">
    <property type="entry name" value="HydB/Nqo4-like"/>
    <property type="match status" value="1"/>
</dbReference>
<dbReference type="SUPFAM" id="SSF143243">
    <property type="entry name" value="Nqo5-like"/>
    <property type="match status" value="1"/>
</dbReference>
<dbReference type="PROSITE" id="PS00542">
    <property type="entry name" value="COMPLEX1_30K"/>
    <property type="match status" value="1"/>
</dbReference>
<dbReference type="PROSITE" id="PS00535">
    <property type="entry name" value="COMPLEX1_49K"/>
    <property type="match status" value="1"/>
</dbReference>
<protein>
    <recommendedName>
        <fullName evidence="1">NADH-quinone oxidoreductase subunit C/D</fullName>
        <ecNumber evidence="1">7.1.1.-</ecNumber>
    </recommendedName>
    <alternativeName>
        <fullName evidence="1">NADH dehydrogenase I subunit C/D</fullName>
    </alternativeName>
    <alternativeName>
        <fullName evidence="1">NDH-1 subunit C/D</fullName>
    </alternativeName>
</protein>
<gene>
    <name evidence="1" type="primary">nuoC</name>
    <name evidence="1" type="synonym">nuoCD</name>
    <name evidence="1" type="synonym">nuoD</name>
    <name type="ordered locus">E2348C_2426</name>
</gene>
<name>NUOCD_ECO27</name>
<reference key="1">
    <citation type="journal article" date="2009" name="J. Bacteriol.">
        <title>Complete genome sequence and comparative genome analysis of enteropathogenic Escherichia coli O127:H6 strain E2348/69.</title>
        <authorList>
            <person name="Iguchi A."/>
            <person name="Thomson N.R."/>
            <person name="Ogura Y."/>
            <person name="Saunders D."/>
            <person name="Ooka T."/>
            <person name="Henderson I.R."/>
            <person name="Harris D."/>
            <person name="Asadulghani M."/>
            <person name="Kurokawa K."/>
            <person name="Dean P."/>
            <person name="Kenny B."/>
            <person name="Quail M.A."/>
            <person name="Thurston S."/>
            <person name="Dougan G."/>
            <person name="Hayashi T."/>
            <person name="Parkhill J."/>
            <person name="Frankel G."/>
        </authorList>
    </citation>
    <scope>NUCLEOTIDE SEQUENCE [LARGE SCALE GENOMIC DNA]</scope>
    <source>
        <strain>E2348/69 / EPEC</strain>
    </source>
</reference>
<accession>B7UFU4</accession>
<organism>
    <name type="scientific">Escherichia coli O127:H6 (strain E2348/69 / EPEC)</name>
    <dbReference type="NCBI Taxonomy" id="574521"/>
    <lineage>
        <taxon>Bacteria</taxon>
        <taxon>Pseudomonadati</taxon>
        <taxon>Pseudomonadota</taxon>
        <taxon>Gammaproteobacteria</taxon>
        <taxon>Enterobacterales</taxon>
        <taxon>Enterobacteriaceae</taxon>
        <taxon>Escherichia</taxon>
    </lineage>
</organism>
<comment type="function">
    <text evidence="1">NDH-1 shuttles electrons from NADH, via FMN and iron-sulfur (Fe-S) centers, to quinones in the respiratory chain. The immediate electron acceptor for the enzyme in this species is believed to be ubiquinone. Couples the redox reaction to proton translocation (for every two electrons transferred, four hydrogen ions are translocated across the cytoplasmic membrane), and thus conserves the redox energy in a proton gradient.</text>
</comment>
<comment type="catalytic activity">
    <reaction evidence="1">
        <text>a quinone + NADH + 5 H(+)(in) = a quinol + NAD(+) + 4 H(+)(out)</text>
        <dbReference type="Rhea" id="RHEA:57888"/>
        <dbReference type="ChEBI" id="CHEBI:15378"/>
        <dbReference type="ChEBI" id="CHEBI:24646"/>
        <dbReference type="ChEBI" id="CHEBI:57540"/>
        <dbReference type="ChEBI" id="CHEBI:57945"/>
        <dbReference type="ChEBI" id="CHEBI:132124"/>
    </reaction>
</comment>
<comment type="subunit">
    <text evidence="1">NDH-1 is composed of 13 different subunits. Subunits NuoB, CD, E, F, and G constitute the peripheral sector of the complex.</text>
</comment>
<comment type="subcellular location">
    <subcellularLocation>
        <location evidence="1">Cell inner membrane</location>
        <topology evidence="1">Peripheral membrane protein</topology>
        <orientation evidence="1">Cytoplasmic side</orientation>
    </subcellularLocation>
</comment>
<comment type="similarity">
    <text evidence="1">In the N-terminal section; belongs to the complex I 30 kDa subunit family.</text>
</comment>
<comment type="similarity">
    <text evidence="1">In the C-terminal section; belongs to the complex I 49 kDa subunit family.</text>
</comment>
<evidence type="ECO:0000255" key="1">
    <source>
        <dbReference type="HAMAP-Rule" id="MF_01359"/>
    </source>
</evidence>